<reference key="1">
    <citation type="journal article" date="2009" name="PLoS Biol.">
        <title>Lineage-specific biology revealed by a finished genome assembly of the mouse.</title>
        <authorList>
            <person name="Church D.M."/>
            <person name="Goodstadt L."/>
            <person name="Hillier L.W."/>
            <person name="Zody M.C."/>
            <person name="Goldstein S."/>
            <person name="She X."/>
            <person name="Bult C.J."/>
            <person name="Agarwala R."/>
            <person name="Cherry J.L."/>
            <person name="DiCuccio M."/>
            <person name="Hlavina W."/>
            <person name="Kapustin Y."/>
            <person name="Meric P."/>
            <person name="Maglott D."/>
            <person name="Birtle Z."/>
            <person name="Marques A.C."/>
            <person name="Graves T."/>
            <person name="Zhou S."/>
            <person name="Teague B."/>
            <person name="Potamousis K."/>
            <person name="Churas C."/>
            <person name="Place M."/>
            <person name="Herschleb J."/>
            <person name="Runnheim R."/>
            <person name="Forrest D."/>
            <person name="Amos-Landgraf J."/>
            <person name="Schwartz D.C."/>
            <person name="Cheng Z."/>
            <person name="Lindblad-Toh K."/>
            <person name="Eichler E.E."/>
            <person name="Ponting C.P."/>
        </authorList>
    </citation>
    <scope>NUCLEOTIDE SEQUENCE [LARGE SCALE GENOMIC DNA]</scope>
    <source>
        <strain>C57BL/6J</strain>
    </source>
</reference>
<reference key="2">
    <citation type="journal article" date="2004" name="Genome Res.">
        <title>The status, quality, and expansion of the NIH full-length cDNA project: the Mammalian Gene Collection (MGC).</title>
        <authorList>
            <consortium name="The MGC Project Team"/>
        </authorList>
    </citation>
    <scope>NUCLEOTIDE SEQUENCE [LARGE SCALE MRNA]</scope>
    <source>
        <strain>C57BL/6J</strain>
        <tissue>Eye</tissue>
    </source>
</reference>
<reference key="3">
    <citation type="journal article" date="2006" name="Development">
        <title>An oligodendrocyte-specific zinc-finger transcription regulator cooperates with Olig2 to promote oligodendrocyte differentiation.</title>
        <authorList>
            <person name="Wang S.Z."/>
            <person name="Dulin J."/>
            <person name="Wu H."/>
            <person name="Hurlock E."/>
            <person name="Lee S.E."/>
            <person name="Jansson K."/>
            <person name="Lu Q.R."/>
        </authorList>
    </citation>
    <scope>FUNCTION</scope>
    <scope>INTERACTION WITH OLIG2</scope>
    <scope>SUBCELLULAR LOCATION</scope>
    <scope>DEVELOPMENTAL STAGE</scope>
    <scope>INDUCTION</scope>
    <scope>NUCLEAR LOCALIZATION SIGNAL</scope>
</reference>
<reference key="4">
    <citation type="journal article" date="2011" name="Sci. Rep.">
        <title>Zfp488 promotes oligodendrocyte differentiation of neural progenitor cells in adult mice after demyelination.</title>
        <authorList>
            <person name="Soundarapandian M.M."/>
            <person name="Selvaraj V."/>
            <person name="Lo U.G."/>
            <person name="Golub M.S."/>
            <person name="Feldman D.H."/>
            <person name="Pleasure D.E."/>
            <person name="Deng W."/>
        </authorList>
    </citation>
    <scope>FUNCTION</scope>
</reference>
<sequence>MAAGTSTLLSLSGPADHMAEGKGAPLRPSVEKRWKLMEPKQTQAGMFKKMSLVDSDTAAGKGSQDEAYTELSLPTAPNKPRLDRPRACKAYTEQRHNTFTELSCLQERPGDIQAQTRKLENPEGQLGPQQLPSSFLRASGDGTVCSAWPGAPRSEQKSAFSKPAKRPAEKPKRSPMLLAGGSAEGSWELSGLITTVDIPYWAHLSTFKFMGDFWKLHTLSQNILLCNAFQGAPTPWLEHTQVQAPTSSAPSSTASRALLPPTLSSLGLSTQNWCAKCNLAFRLTADLVFHMRSHHKREHVGPDPHSKKRREEVLTCPVCHEYFRERHHLSRHMASHS</sequence>
<keyword id="KW-0238">DNA-binding</keyword>
<keyword id="KW-0479">Metal-binding</keyword>
<keyword id="KW-0524">Neurogenesis</keyword>
<keyword id="KW-0539">Nucleus</keyword>
<keyword id="KW-1185">Reference proteome</keyword>
<keyword id="KW-0677">Repeat</keyword>
<keyword id="KW-0678">Repressor</keyword>
<keyword id="KW-0804">Transcription</keyword>
<keyword id="KW-0805">Transcription regulation</keyword>
<keyword id="KW-0862">Zinc</keyword>
<keyword id="KW-0863">Zinc-finger</keyword>
<protein>
    <recommendedName>
        <fullName>Zinc finger protein 488</fullName>
    </recommendedName>
</protein>
<gene>
    <name type="primary">Znf488</name>
    <name type="synonym">Gm1206</name>
    <name type="synonym">Zfp488</name>
</gene>
<feature type="chain" id="PRO_0000353090" description="Zinc finger protein 488">
    <location>
        <begin position="1"/>
        <end position="337"/>
    </location>
</feature>
<feature type="zinc finger region" description="C2H2-type 1" evidence="1">
    <location>
        <begin position="272"/>
        <end position="299"/>
    </location>
</feature>
<feature type="zinc finger region" description="C2H2-type 2" evidence="1">
    <location>
        <begin position="314"/>
        <end position="336"/>
    </location>
</feature>
<feature type="region of interest" description="Disordered" evidence="3">
    <location>
        <begin position="1"/>
        <end position="32"/>
    </location>
</feature>
<feature type="region of interest" description="Disordered" evidence="3">
    <location>
        <begin position="55"/>
        <end position="83"/>
    </location>
</feature>
<feature type="region of interest" description="Important for transcriptional repression activity" evidence="4">
    <location>
        <begin position="69"/>
        <end position="184"/>
    </location>
</feature>
<feature type="region of interest" description="Disordered" evidence="3">
    <location>
        <begin position="146"/>
        <end position="179"/>
    </location>
</feature>
<feature type="short sequence motif" description="Nuclear localization signal" evidence="2 7">
    <location>
        <begin position="295"/>
        <end position="302"/>
    </location>
</feature>
<feature type="compositionally biased region" description="Polar residues" evidence="3">
    <location>
        <begin position="1"/>
        <end position="10"/>
    </location>
</feature>
<accession>Q5HZG9</accession>
<organism>
    <name type="scientific">Mus musculus</name>
    <name type="common">Mouse</name>
    <dbReference type="NCBI Taxonomy" id="10090"/>
    <lineage>
        <taxon>Eukaryota</taxon>
        <taxon>Metazoa</taxon>
        <taxon>Chordata</taxon>
        <taxon>Craniata</taxon>
        <taxon>Vertebrata</taxon>
        <taxon>Euteleostomi</taxon>
        <taxon>Mammalia</taxon>
        <taxon>Eutheria</taxon>
        <taxon>Euarchontoglires</taxon>
        <taxon>Glires</taxon>
        <taxon>Rodentia</taxon>
        <taxon>Myomorpha</taxon>
        <taxon>Muroidea</taxon>
        <taxon>Muridae</taxon>
        <taxon>Murinae</taxon>
        <taxon>Mus</taxon>
        <taxon>Mus</taxon>
    </lineage>
</organism>
<name>ZN488_MOUSE</name>
<dbReference type="EMBL" id="AC166828">
    <property type="status" value="NOT_ANNOTATED_CDS"/>
    <property type="molecule type" value="Genomic_DNA"/>
</dbReference>
<dbReference type="EMBL" id="BC089025">
    <property type="protein sequence ID" value="AAH89025.1"/>
    <property type="status" value="ALT_INIT"/>
    <property type="molecule type" value="mRNA"/>
</dbReference>
<dbReference type="CCDS" id="CCDS26930.2"/>
<dbReference type="RefSeq" id="NP_001013799.2">
    <property type="nucleotide sequence ID" value="NM_001013777.2"/>
</dbReference>
<dbReference type="RefSeq" id="XP_006519261.1">
    <property type="nucleotide sequence ID" value="XM_006519198.3"/>
</dbReference>
<dbReference type="FunCoup" id="Q5HZG9">
    <property type="interactions" value="417"/>
</dbReference>
<dbReference type="STRING" id="10090.ENSMUSP00000132436"/>
<dbReference type="PhosphoSitePlus" id="Q5HZG9"/>
<dbReference type="PaxDb" id="10090-ENSMUSP00000132436"/>
<dbReference type="ProteomicsDB" id="275291"/>
<dbReference type="Antibodypedia" id="72957">
    <property type="antibodies" value="180 antibodies from 23 providers"/>
</dbReference>
<dbReference type="Ensembl" id="ENSMUST00000166737.2">
    <property type="protein sequence ID" value="ENSMUSP00000132436.2"/>
    <property type="gene ID" value="ENSMUSG00000044519.9"/>
</dbReference>
<dbReference type="GeneID" id="382867"/>
<dbReference type="KEGG" id="mmu:382867"/>
<dbReference type="UCSC" id="uc007tae.1">
    <property type="organism name" value="mouse"/>
</dbReference>
<dbReference type="AGR" id="MGI:2686052"/>
<dbReference type="CTD" id="382867"/>
<dbReference type="MGI" id="MGI:2686052">
    <property type="gene designation" value="Zfp488"/>
</dbReference>
<dbReference type="VEuPathDB" id="HostDB:ENSMUSG00000044519"/>
<dbReference type="eggNOG" id="KOG1721">
    <property type="taxonomic scope" value="Eukaryota"/>
</dbReference>
<dbReference type="GeneTree" id="ENSGT00890000139463"/>
<dbReference type="HOGENOM" id="CLU_070344_0_0_1"/>
<dbReference type="InParanoid" id="Q5HZG9"/>
<dbReference type="OMA" id="DFWNLQM"/>
<dbReference type="OrthoDB" id="5814089at2759"/>
<dbReference type="PhylomeDB" id="Q5HZG9"/>
<dbReference type="TreeFam" id="TF327090"/>
<dbReference type="BioGRID-ORCS" id="382867">
    <property type="hits" value="1 hit in 79 CRISPR screens"/>
</dbReference>
<dbReference type="ChiTaRS" id="Zfp488">
    <property type="organism name" value="mouse"/>
</dbReference>
<dbReference type="PRO" id="PR:Q5HZG9"/>
<dbReference type="Proteomes" id="UP000000589">
    <property type="component" value="Chromosome 14"/>
</dbReference>
<dbReference type="RNAct" id="Q5HZG9">
    <property type="molecule type" value="protein"/>
</dbReference>
<dbReference type="Bgee" id="ENSMUSG00000044519">
    <property type="expression patterns" value="Expressed in white matter and 24 other cell types or tissues"/>
</dbReference>
<dbReference type="GO" id="GO:0005634">
    <property type="term" value="C:nucleus"/>
    <property type="evidence" value="ECO:0000314"/>
    <property type="project" value="MGI"/>
</dbReference>
<dbReference type="GO" id="GO:0003677">
    <property type="term" value="F:DNA binding"/>
    <property type="evidence" value="ECO:0007669"/>
    <property type="project" value="UniProtKB-KW"/>
</dbReference>
<dbReference type="GO" id="GO:0008270">
    <property type="term" value="F:zinc ion binding"/>
    <property type="evidence" value="ECO:0007669"/>
    <property type="project" value="UniProtKB-KW"/>
</dbReference>
<dbReference type="GO" id="GO:0045892">
    <property type="term" value="P:negative regulation of DNA-templated transcription"/>
    <property type="evidence" value="ECO:0000314"/>
    <property type="project" value="MGI"/>
</dbReference>
<dbReference type="GO" id="GO:0014003">
    <property type="term" value="P:oligodendrocyte development"/>
    <property type="evidence" value="ECO:0000314"/>
    <property type="project" value="MGI"/>
</dbReference>
<dbReference type="GO" id="GO:0031643">
    <property type="term" value="P:positive regulation of myelination"/>
    <property type="evidence" value="ECO:0000314"/>
    <property type="project" value="UniProtKB"/>
</dbReference>
<dbReference type="GO" id="GO:0048714">
    <property type="term" value="P:positive regulation of oligodendrocyte differentiation"/>
    <property type="evidence" value="ECO:0000314"/>
    <property type="project" value="UniProtKB"/>
</dbReference>
<dbReference type="Gene3D" id="3.30.160.60">
    <property type="entry name" value="Classic Zinc Finger"/>
    <property type="match status" value="1"/>
</dbReference>
<dbReference type="InterPro" id="IPR052296">
    <property type="entry name" value="TR-Histone_Methyltrans"/>
</dbReference>
<dbReference type="InterPro" id="IPR013087">
    <property type="entry name" value="Znf_C2H2_type"/>
</dbReference>
<dbReference type="PANTHER" id="PTHR16516">
    <property type="entry name" value="AGAP007109-PA"/>
    <property type="match status" value="1"/>
</dbReference>
<dbReference type="PANTHER" id="PTHR16516:SF5">
    <property type="entry name" value="ZINC FINGER PROTEIN 488"/>
    <property type="match status" value="1"/>
</dbReference>
<dbReference type="SMART" id="SM00355">
    <property type="entry name" value="ZnF_C2H2"/>
    <property type="match status" value="2"/>
</dbReference>
<dbReference type="PROSITE" id="PS00028">
    <property type="entry name" value="ZINC_FINGER_C2H2_1"/>
    <property type="match status" value="2"/>
</dbReference>
<dbReference type="PROSITE" id="PS50157">
    <property type="entry name" value="ZINC_FINGER_C2H2_2"/>
    <property type="match status" value="2"/>
</dbReference>
<evidence type="ECO:0000255" key="1">
    <source>
        <dbReference type="PROSITE-ProRule" id="PRU00042"/>
    </source>
</evidence>
<evidence type="ECO:0000255" key="2">
    <source>
        <dbReference type="PROSITE-ProRule" id="PRU00768"/>
    </source>
</evidence>
<evidence type="ECO:0000256" key="3">
    <source>
        <dbReference type="SAM" id="MobiDB-lite"/>
    </source>
</evidence>
<evidence type="ECO:0000269" key="4">
    <source>
    </source>
</evidence>
<evidence type="ECO:0000269" key="5">
    <source>
    </source>
</evidence>
<evidence type="ECO:0000305" key="6"/>
<evidence type="ECO:0000305" key="7">
    <source>
    </source>
</evidence>
<comment type="function">
    <text evidence="4 5">Transcriptional repressor (PubMed:16908628). Plays a role in oligodendrocyte differentiation, together with OLIG2 (PubMed:16908628, PubMed:22355521). Mediates Notch signaling-activated formation of oligodendrocyte precursors (PubMed:16908628). Promotes differentiation of adult neural stem progenitor cells (NSPCs) into mature oligodendrocytes and contributes to remyelination following nerve injury (PubMed:22355521).</text>
</comment>
<comment type="subunit">
    <text evidence="4">Interacts with OLIG2.</text>
</comment>
<comment type="subcellular location">
    <subcellularLocation>
        <location evidence="4">Nucleus</location>
    </subcellularLocation>
</comment>
<comment type="developmental stage">
    <text evidence="4">Detected in differentiated oligodendrocytes, from embryos at 14.5 dpc through to the postnatal stage.</text>
</comment>
<comment type="induction">
    <text evidence="4">Up-regulated by OLIG1.</text>
</comment>
<comment type="similarity">
    <text evidence="6">Belongs to the krueppel C2H2-type zinc-finger protein family.</text>
</comment>
<comment type="sequence caution" evidence="6">
    <conflict type="erroneous initiation">
        <sequence resource="EMBL-CDS" id="AAH89025"/>
    </conflict>
    <text>Truncated N-terminus.</text>
</comment>
<proteinExistence type="evidence at protein level"/>